<feature type="chain" id="PRO_0000215742" description="ATP-dependent Clp protease adapter protein ClpS 1">
    <location>
        <begin position="1"/>
        <end position="103"/>
    </location>
</feature>
<proteinExistence type="inferred from homology"/>
<name>CLPS1_RHOPA</name>
<evidence type="ECO:0000255" key="1">
    <source>
        <dbReference type="HAMAP-Rule" id="MF_00302"/>
    </source>
</evidence>
<evidence type="ECO:0000305" key="2"/>
<accession>Q6NAI2</accession>
<gene>
    <name evidence="1" type="primary">clpS1</name>
    <name type="ordered locus">RPA1203</name>
</gene>
<organism>
    <name type="scientific">Rhodopseudomonas palustris (strain ATCC BAA-98 / CGA009)</name>
    <dbReference type="NCBI Taxonomy" id="258594"/>
    <lineage>
        <taxon>Bacteria</taxon>
        <taxon>Pseudomonadati</taxon>
        <taxon>Pseudomonadota</taxon>
        <taxon>Alphaproteobacteria</taxon>
        <taxon>Hyphomicrobiales</taxon>
        <taxon>Nitrobacteraceae</taxon>
        <taxon>Rhodopseudomonas</taxon>
    </lineage>
</organism>
<comment type="function">
    <text evidence="1">Involved in the modulation of the specificity of the ClpAP-mediated ATP-dependent protein degradation.</text>
</comment>
<comment type="subunit">
    <text evidence="1">Binds to the N-terminal domain of the chaperone ClpA.</text>
</comment>
<comment type="similarity">
    <text evidence="1">Belongs to the ClpS family.</text>
</comment>
<comment type="sequence caution" evidence="2">
    <conflict type="erroneous initiation">
        <sequence resource="EMBL-CDS" id="CAE26646"/>
    </conflict>
</comment>
<dbReference type="EMBL" id="BX572596">
    <property type="protein sequence ID" value="CAE26646.1"/>
    <property type="status" value="ALT_INIT"/>
    <property type="molecule type" value="Genomic_DNA"/>
</dbReference>
<dbReference type="RefSeq" id="WP_011156767.1">
    <property type="nucleotide sequence ID" value="NZ_CP116810.1"/>
</dbReference>
<dbReference type="SMR" id="Q6NAI2"/>
<dbReference type="STRING" id="258594.RPA1203"/>
<dbReference type="GeneID" id="66892226"/>
<dbReference type="eggNOG" id="COG2127">
    <property type="taxonomic scope" value="Bacteria"/>
</dbReference>
<dbReference type="HOGENOM" id="CLU_134358_3_0_5"/>
<dbReference type="PhylomeDB" id="Q6NAI2"/>
<dbReference type="GO" id="GO:0030163">
    <property type="term" value="P:protein catabolic process"/>
    <property type="evidence" value="ECO:0007669"/>
    <property type="project" value="InterPro"/>
</dbReference>
<dbReference type="GO" id="GO:0006508">
    <property type="term" value="P:proteolysis"/>
    <property type="evidence" value="ECO:0007669"/>
    <property type="project" value="UniProtKB-UniRule"/>
</dbReference>
<dbReference type="FunFam" id="3.30.1390.10:FF:000002">
    <property type="entry name" value="ATP-dependent Clp protease adapter protein ClpS"/>
    <property type="match status" value="1"/>
</dbReference>
<dbReference type="Gene3D" id="3.30.1390.10">
    <property type="match status" value="1"/>
</dbReference>
<dbReference type="HAMAP" id="MF_00302">
    <property type="entry name" value="ClpS"/>
    <property type="match status" value="1"/>
</dbReference>
<dbReference type="InterPro" id="IPR022935">
    <property type="entry name" value="ClpS"/>
</dbReference>
<dbReference type="InterPro" id="IPR003769">
    <property type="entry name" value="ClpS_core"/>
</dbReference>
<dbReference type="InterPro" id="IPR014719">
    <property type="entry name" value="Ribosomal_bL12_C/ClpS-like"/>
</dbReference>
<dbReference type="NCBIfam" id="NF009564">
    <property type="entry name" value="PRK13019.1-4"/>
    <property type="match status" value="1"/>
</dbReference>
<dbReference type="PANTHER" id="PTHR33473:SF19">
    <property type="entry name" value="ATP-DEPENDENT CLP PROTEASE ADAPTER PROTEIN CLPS"/>
    <property type="match status" value="1"/>
</dbReference>
<dbReference type="PANTHER" id="PTHR33473">
    <property type="entry name" value="ATP-DEPENDENT CLP PROTEASE ADAPTER PROTEIN CLPS1, CHLOROPLASTIC"/>
    <property type="match status" value="1"/>
</dbReference>
<dbReference type="Pfam" id="PF02617">
    <property type="entry name" value="ClpS"/>
    <property type="match status" value="1"/>
</dbReference>
<dbReference type="SUPFAM" id="SSF54736">
    <property type="entry name" value="ClpS-like"/>
    <property type="match status" value="1"/>
</dbReference>
<sequence length="103" mass="11533">MSNIDLKPKTKAKAKIKVERPKLHKVILVNDDYTPREFVVSVLKGEFRMTEDQATKVMLTAHQRGVCVVGVFTKDVAETKATRATDAGRAKGYPLLFTTEPEE</sequence>
<reference key="1">
    <citation type="journal article" date="2004" name="Nat. Biotechnol.">
        <title>Complete genome sequence of the metabolically versatile photosynthetic bacterium Rhodopseudomonas palustris.</title>
        <authorList>
            <person name="Larimer F.W."/>
            <person name="Chain P."/>
            <person name="Hauser L."/>
            <person name="Lamerdin J.E."/>
            <person name="Malfatti S."/>
            <person name="Do L."/>
            <person name="Land M.L."/>
            <person name="Pelletier D.A."/>
            <person name="Beatty J.T."/>
            <person name="Lang A.S."/>
            <person name="Tabita F.R."/>
            <person name="Gibson J.L."/>
            <person name="Hanson T.E."/>
            <person name="Bobst C."/>
            <person name="Torres y Torres J.L."/>
            <person name="Peres C."/>
            <person name="Harrison F.H."/>
            <person name="Gibson J."/>
            <person name="Harwood C.S."/>
        </authorList>
    </citation>
    <scope>NUCLEOTIDE SEQUENCE [LARGE SCALE GENOMIC DNA]</scope>
    <source>
        <strain>ATCC BAA-98 / CGA009</strain>
    </source>
</reference>
<protein>
    <recommendedName>
        <fullName evidence="1">ATP-dependent Clp protease adapter protein ClpS 1</fullName>
    </recommendedName>
</protein>